<sequence length="93" mass="10310">MSNVCIIAWVYGRVQGVGFHYTTQHEAQRLGLTGYAKNMDDGSVEVVACGDAAQVEKLIKWLKEGGPRSARVDKILTEPHSPRETLTGFSIRY</sequence>
<evidence type="ECO:0000255" key="1">
    <source>
        <dbReference type="HAMAP-Rule" id="MF_01450"/>
    </source>
</evidence>
<evidence type="ECO:0000305" key="2"/>
<proteinExistence type="inferred from homology"/>
<reference key="1">
    <citation type="journal article" date="2004" name="Nat. Genet.">
        <title>Comparison of genome degradation in Paratyphi A and Typhi, human-restricted serovars of Salmonella enterica that cause typhoid.</title>
        <authorList>
            <person name="McClelland M."/>
            <person name="Sanderson K.E."/>
            <person name="Clifton S.W."/>
            <person name="Latreille P."/>
            <person name="Porwollik S."/>
            <person name="Sabo A."/>
            <person name="Meyer R."/>
            <person name="Bieri T."/>
            <person name="Ozersky P."/>
            <person name="McLellan M."/>
            <person name="Harkins C.R."/>
            <person name="Wang C."/>
            <person name="Nguyen C."/>
            <person name="Berghoff A."/>
            <person name="Elliott G."/>
            <person name="Kohlberg S."/>
            <person name="Strong C."/>
            <person name="Du F."/>
            <person name="Carter J."/>
            <person name="Kremizki C."/>
            <person name="Layman D."/>
            <person name="Leonard S."/>
            <person name="Sun H."/>
            <person name="Fulton L."/>
            <person name="Nash W."/>
            <person name="Miner T."/>
            <person name="Minx P."/>
            <person name="Delehaunty K."/>
            <person name="Fronick C."/>
            <person name="Magrini V."/>
            <person name="Nhan M."/>
            <person name="Warren W."/>
            <person name="Florea L."/>
            <person name="Spieth J."/>
            <person name="Wilson R.K."/>
        </authorList>
    </citation>
    <scope>NUCLEOTIDE SEQUENCE [LARGE SCALE GENOMIC DNA]</scope>
    <source>
        <strain>ATCC 9150 / SARB42</strain>
    </source>
</reference>
<comment type="catalytic activity">
    <reaction evidence="1">
        <text>an acyl phosphate + H2O = a carboxylate + phosphate + H(+)</text>
        <dbReference type="Rhea" id="RHEA:14965"/>
        <dbReference type="ChEBI" id="CHEBI:15377"/>
        <dbReference type="ChEBI" id="CHEBI:15378"/>
        <dbReference type="ChEBI" id="CHEBI:29067"/>
        <dbReference type="ChEBI" id="CHEBI:43474"/>
        <dbReference type="ChEBI" id="CHEBI:59918"/>
        <dbReference type="EC" id="3.6.1.7"/>
    </reaction>
</comment>
<comment type="similarity">
    <text evidence="1">Belongs to the acylphosphatase family.</text>
</comment>
<comment type="caution">
    <text evidence="2">Lacks the conserved active site Arg in position 20. There is a histidine in this position.</text>
</comment>
<name>ACYP_SALPA</name>
<feature type="chain" id="PRO_0000326796" description="Acylphosphatase">
    <location>
        <begin position="1"/>
        <end position="93"/>
    </location>
</feature>
<feature type="domain" description="Acylphosphatase-like" evidence="1">
    <location>
        <begin position="5"/>
        <end position="93"/>
    </location>
</feature>
<feature type="active site" evidence="1">
    <location>
        <position position="38"/>
    </location>
</feature>
<feature type="disulfide bond" evidence="1">
    <location>
        <begin position="5"/>
        <end position="49"/>
    </location>
</feature>
<protein>
    <recommendedName>
        <fullName evidence="1">Acylphosphatase</fullName>
        <ecNumber evidence="1">3.6.1.7</ecNumber>
    </recommendedName>
    <alternativeName>
        <fullName evidence="1">Acylphosphate phosphohydrolase</fullName>
    </alternativeName>
</protein>
<accession>Q5PGB8</accession>
<organism>
    <name type="scientific">Salmonella paratyphi A (strain ATCC 9150 / SARB42)</name>
    <dbReference type="NCBI Taxonomy" id="295319"/>
    <lineage>
        <taxon>Bacteria</taxon>
        <taxon>Pseudomonadati</taxon>
        <taxon>Pseudomonadota</taxon>
        <taxon>Gammaproteobacteria</taxon>
        <taxon>Enterobacterales</taxon>
        <taxon>Enterobacteriaceae</taxon>
        <taxon>Salmonella</taxon>
    </lineage>
</organism>
<dbReference type="EC" id="3.6.1.7" evidence="1"/>
<dbReference type="EMBL" id="CP000026">
    <property type="protein sequence ID" value="AAV77684.1"/>
    <property type="molecule type" value="Genomic_DNA"/>
</dbReference>
<dbReference type="RefSeq" id="WP_000072878.1">
    <property type="nucleotide sequence ID" value="NC_006511.1"/>
</dbReference>
<dbReference type="SMR" id="Q5PGB8"/>
<dbReference type="KEGG" id="spt:SPA1767"/>
<dbReference type="HOGENOM" id="CLU_141932_1_2_6"/>
<dbReference type="Proteomes" id="UP000008185">
    <property type="component" value="Chromosome"/>
</dbReference>
<dbReference type="GO" id="GO:0003998">
    <property type="term" value="F:acylphosphatase activity"/>
    <property type="evidence" value="ECO:0007669"/>
    <property type="project" value="UniProtKB-UniRule"/>
</dbReference>
<dbReference type="FunFam" id="3.30.70.100:FF:000012">
    <property type="entry name" value="Acylphosphatase"/>
    <property type="match status" value="1"/>
</dbReference>
<dbReference type="Gene3D" id="3.30.70.100">
    <property type="match status" value="1"/>
</dbReference>
<dbReference type="HAMAP" id="MF_01450">
    <property type="entry name" value="Acylphosphatase_entero"/>
    <property type="match status" value="1"/>
</dbReference>
<dbReference type="InterPro" id="IPR020456">
    <property type="entry name" value="Acylphosphatase"/>
</dbReference>
<dbReference type="InterPro" id="IPR001792">
    <property type="entry name" value="Acylphosphatase-like_dom"/>
</dbReference>
<dbReference type="InterPro" id="IPR036046">
    <property type="entry name" value="Acylphosphatase-like_dom_sf"/>
</dbReference>
<dbReference type="InterPro" id="IPR028627">
    <property type="entry name" value="Acylphosphatase_bac"/>
</dbReference>
<dbReference type="InterPro" id="IPR017968">
    <property type="entry name" value="Acylphosphatase_CS"/>
</dbReference>
<dbReference type="NCBIfam" id="NF011000">
    <property type="entry name" value="PRK14426.1"/>
    <property type="match status" value="1"/>
</dbReference>
<dbReference type="PANTHER" id="PTHR47268">
    <property type="entry name" value="ACYLPHOSPHATASE"/>
    <property type="match status" value="1"/>
</dbReference>
<dbReference type="PANTHER" id="PTHR47268:SF4">
    <property type="entry name" value="ACYLPHOSPHATASE"/>
    <property type="match status" value="1"/>
</dbReference>
<dbReference type="Pfam" id="PF00708">
    <property type="entry name" value="Acylphosphatase"/>
    <property type="match status" value="1"/>
</dbReference>
<dbReference type="PRINTS" id="PR00112">
    <property type="entry name" value="ACYLPHPHTASE"/>
</dbReference>
<dbReference type="SUPFAM" id="SSF54975">
    <property type="entry name" value="Acylphosphatase/BLUF domain-like"/>
    <property type="match status" value="1"/>
</dbReference>
<dbReference type="PROSITE" id="PS00151">
    <property type="entry name" value="ACYLPHOSPHATASE_2"/>
    <property type="match status" value="1"/>
</dbReference>
<dbReference type="PROSITE" id="PS51160">
    <property type="entry name" value="ACYLPHOSPHATASE_3"/>
    <property type="match status" value="1"/>
</dbReference>
<keyword id="KW-1015">Disulfide bond</keyword>
<keyword id="KW-0378">Hydrolase</keyword>
<gene>
    <name evidence="1" type="primary">yccX</name>
    <name type="ordered locus">SPA1767</name>
</gene>